<comment type="function">
    <text evidence="1">Part of the ABC transporter complex ZnuABC involved in zinc import. Responsible for energy coupling to the transport system.</text>
</comment>
<comment type="catalytic activity">
    <reaction evidence="1">
        <text>Zn(2+)(out) + ATP(in) + H2O(in) = Zn(2+)(in) + ADP(in) + phosphate(in) + H(+)(in)</text>
        <dbReference type="Rhea" id="RHEA:29795"/>
        <dbReference type="ChEBI" id="CHEBI:15377"/>
        <dbReference type="ChEBI" id="CHEBI:15378"/>
        <dbReference type="ChEBI" id="CHEBI:29105"/>
        <dbReference type="ChEBI" id="CHEBI:30616"/>
        <dbReference type="ChEBI" id="CHEBI:43474"/>
        <dbReference type="ChEBI" id="CHEBI:456216"/>
        <dbReference type="EC" id="7.2.2.20"/>
    </reaction>
</comment>
<comment type="subunit">
    <text evidence="1">The complex is composed of two ATP-binding proteins (ZnuC), two transmembrane proteins (ZnuB) and a solute-binding protein (ZnuA).</text>
</comment>
<comment type="subcellular location">
    <subcellularLocation>
        <location evidence="1">Cell inner membrane</location>
        <topology evidence="1">Peripheral membrane protein</topology>
    </subcellularLocation>
</comment>
<comment type="similarity">
    <text evidence="1">Belongs to the ABC transporter superfamily. Zinc importer (TC 3.A.1.15.5) family.</text>
</comment>
<dbReference type="EC" id="7.2.2.20" evidence="1"/>
<dbReference type="EMBL" id="AM236080">
    <property type="protein sequence ID" value="CAK08664.1"/>
    <property type="molecule type" value="Genomic_DNA"/>
</dbReference>
<dbReference type="RefSeq" id="WP_011652682.1">
    <property type="nucleotide sequence ID" value="NC_008380.1"/>
</dbReference>
<dbReference type="SMR" id="Q1MEG2"/>
<dbReference type="EnsemblBacteria" id="CAK08664">
    <property type="protein sequence ID" value="CAK08664"/>
    <property type="gene ID" value="RL3177"/>
</dbReference>
<dbReference type="KEGG" id="rle:RL3177"/>
<dbReference type="eggNOG" id="COG1121">
    <property type="taxonomic scope" value="Bacteria"/>
</dbReference>
<dbReference type="HOGENOM" id="CLU_000604_1_11_5"/>
<dbReference type="Proteomes" id="UP000006575">
    <property type="component" value="Chromosome"/>
</dbReference>
<dbReference type="GO" id="GO:0005886">
    <property type="term" value="C:plasma membrane"/>
    <property type="evidence" value="ECO:0007669"/>
    <property type="project" value="UniProtKB-SubCell"/>
</dbReference>
<dbReference type="GO" id="GO:0015633">
    <property type="term" value="F:ABC-type zinc transporter activity"/>
    <property type="evidence" value="ECO:0007669"/>
    <property type="project" value="UniProtKB-EC"/>
</dbReference>
<dbReference type="GO" id="GO:0005524">
    <property type="term" value="F:ATP binding"/>
    <property type="evidence" value="ECO:0007669"/>
    <property type="project" value="UniProtKB-KW"/>
</dbReference>
<dbReference type="GO" id="GO:0016887">
    <property type="term" value="F:ATP hydrolysis activity"/>
    <property type="evidence" value="ECO:0007669"/>
    <property type="project" value="InterPro"/>
</dbReference>
<dbReference type="GO" id="GO:0010043">
    <property type="term" value="P:response to zinc ion"/>
    <property type="evidence" value="ECO:0007669"/>
    <property type="project" value="TreeGrafter"/>
</dbReference>
<dbReference type="FunFam" id="3.40.50.300:FF:000392">
    <property type="entry name" value="Zinc import ATP-binding protein ZnuC"/>
    <property type="match status" value="1"/>
</dbReference>
<dbReference type="Gene3D" id="3.40.50.300">
    <property type="entry name" value="P-loop containing nucleotide triphosphate hydrolases"/>
    <property type="match status" value="1"/>
</dbReference>
<dbReference type="InterPro" id="IPR003593">
    <property type="entry name" value="AAA+_ATPase"/>
</dbReference>
<dbReference type="InterPro" id="IPR003439">
    <property type="entry name" value="ABC_transporter-like_ATP-bd"/>
</dbReference>
<dbReference type="InterPro" id="IPR017871">
    <property type="entry name" value="ABC_transporter-like_CS"/>
</dbReference>
<dbReference type="InterPro" id="IPR050153">
    <property type="entry name" value="Metal_Ion_Import_ABC"/>
</dbReference>
<dbReference type="InterPro" id="IPR027417">
    <property type="entry name" value="P-loop_NTPase"/>
</dbReference>
<dbReference type="PANTHER" id="PTHR42734">
    <property type="entry name" value="METAL TRANSPORT SYSTEM ATP-BINDING PROTEIN TM_0124-RELATED"/>
    <property type="match status" value="1"/>
</dbReference>
<dbReference type="PANTHER" id="PTHR42734:SF9">
    <property type="entry name" value="ZINC IMPORT ATP-BINDING PROTEIN ZNUC"/>
    <property type="match status" value="1"/>
</dbReference>
<dbReference type="Pfam" id="PF00005">
    <property type="entry name" value="ABC_tran"/>
    <property type="match status" value="1"/>
</dbReference>
<dbReference type="SMART" id="SM00382">
    <property type="entry name" value="AAA"/>
    <property type="match status" value="1"/>
</dbReference>
<dbReference type="SUPFAM" id="SSF52540">
    <property type="entry name" value="P-loop containing nucleoside triphosphate hydrolases"/>
    <property type="match status" value="1"/>
</dbReference>
<dbReference type="PROSITE" id="PS00211">
    <property type="entry name" value="ABC_TRANSPORTER_1"/>
    <property type="match status" value="1"/>
</dbReference>
<dbReference type="PROSITE" id="PS50893">
    <property type="entry name" value="ABC_TRANSPORTER_2"/>
    <property type="match status" value="1"/>
</dbReference>
<dbReference type="PROSITE" id="PS51298">
    <property type="entry name" value="ZNUC"/>
    <property type="match status" value="1"/>
</dbReference>
<name>ZNUC_RHIJ3</name>
<gene>
    <name evidence="1" type="primary">znuC</name>
    <name type="ordered locus">RL3177</name>
</gene>
<sequence>MLSPAKTPAGIRAEPLVSLENVGVLRNGRWLVRGVDFSVSRGEIVTLIGPNGSGKSTSAKAAIGVLKPDEGRVERKAGLKVGYVPQKLSIDWTLPLSVRRLMTLTGPLPERDMLSALESAGIAHMLDAEVQHLSGGEFQRALMARAIARKPDLLVLDEPVQGVDFSGEIVLYDLIKSIRNATGCGILLISHDLHVVMAETDTVICLNGHVCCRGTPESVSRSPEYVRLFGSRAAQTLAVYSHHHDHTHLPDGRVQHADGTVTDHCHPDDGHHAHEHGHAGHEHDHDHPDHAHPHAHEAGERHA</sequence>
<evidence type="ECO:0000255" key="1">
    <source>
        <dbReference type="HAMAP-Rule" id="MF_01725"/>
    </source>
</evidence>
<evidence type="ECO:0000256" key="2">
    <source>
        <dbReference type="SAM" id="MobiDB-lite"/>
    </source>
</evidence>
<reference key="1">
    <citation type="journal article" date="2006" name="Genome Biol.">
        <title>The genome of Rhizobium leguminosarum has recognizable core and accessory components.</title>
        <authorList>
            <person name="Young J.P.W."/>
            <person name="Crossman L.C."/>
            <person name="Johnston A.W.B."/>
            <person name="Thomson N.R."/>
            <person name="Ghazoui Z.F."/>
            <person name="Hull K.H."/>
            <person name="Wexler M."/>
            <person name="Curson A.R.J."/>
            <person name="Todd J.D."/>
            <person name="Poole P.S."/>
            <person name="Mauchline T.H."/>
            <person name="East A.K."/>
            <person name="Quail M.A."/>
            <person name="Churcher C."/>
            <person name="Arrowsmith C."/>
            <person name="Cherevach I."/>
            <person name="Chillingworth T."/>
            <person name="Clarke K."/>
            <person name="Cronin A."/>
            <person name="Davis P."/>
            <person name="Fraser A."/>
            <person name="Hance Z."/>
            <person name="Hauser H."/>
            <person name="Jagels K."/>
            <person name="Moule S."/>
            <person name="Mungall K."/>
            <person name="Norbertczak H."/>
            <person name="Rabbinowitsch E."/>
            <person name="Sanders M."/>
            <person name="Simmonds M."/>
            <person name="Whitehead S."/>
            <person name="Parkhill J."/>
        </authorList>
    </citation>
    <scope>NUCLEOTIDE SEQUENCE [LARGE SCALE GENOMIC DNA]</scope>
    <source>
        <strain>DSM 114642 / LMG 32736 / 3841</strain>
    </source>
</reference>
<organism>
    <name type="scientific">Rhizobium johnstonii (strain DSM 114642 / LMG 32736 / 3841)</name>
    <name type="common">Rhizobium leguminosarum bv. viciae</name>
    <dbReference type="NCBI Taxonomy" id="216596"/>
    <lineage>
        <taxon>Bacteria</taxon>
        <taxon>Pseudomonadati</taxon>
        <taxon>Pseudomonadota</taxon>
        <taxon>Alphaproteobacteria</taxon>
        <taxon>Hyphomicrobiales</taxon>
        <taxon>Rhizobiaceae</taxon>
        <taxon>Rhizobium/Agrobacterium group</taxon>
        <taxon>Rhizobium</taxon>
        <taxon>Rhizobium johnstonii</taxon>
    </lineage>
</organism>
<feature type="chain" id="PRO_0000281536" description="Zinc import ATP-binding protein ZnuC">
    <location>
        <begin position="1"/>
        <end position="303"/>
    </location>
</feature>
<feature type="domain" description="ABC transporter" evidence="1">
    <location>
        <begin position="17"/>
        <end position="232"/>
    </location>
</feature>
<feature type="region of interest" description="Disordered" evidence="2">
    <location>
        <begin position="263"/>
        <end position="303"/>
    </location>
</feature>
<feature type="binding site" evidence="1">
    <location>
        <begin position="49"/>
        <end position="56"/>
    </location>
    <ligand>
        <name>ATP</name>
        <dbReference type="ChEBI" id="CHEBI:30616"/>
    </ligand>
</feature>
<protein>
    <recommendedName>
        <fullName evidence="1">Zinc import ATP-binding protein ZnuC</fullName>
        <ecNumber evidence="1">7.2.2.20</ecNumber>
    </recommendedName>
</protein>
<proteinExistence type="inferred from homology"/>
<accession>Q1MEG2</accession>
<keyword id="KW-0067">ATP-binding</keyword>
<keyword id="KW-0997">Cell inner membrane</keyword>
<keyword id="KW-1003">Cell membrane</keyword>
<keyword id="KW-0406">Ion transport</keyword>
<keyword id="KW-0472">Membrane</keyword>
<keyword id="KW-0547">Nucleotide-binding</keyword>
<keyword id="KW-1278">Translocase</keyword>
<keyword id="KW-0813">Transport</keyword>
<keyword id="KW-0862">Zinc</keyword>
<keyword id="KW-0864">Zinc transport</keyword>